<keyword id="KW-0997">Cell inner membrane</keyword>
<keyword id="KW-1003">Cell membrane</keyword>
<keyword id="KW-0472">Membrane</keyword>
<keyword id="KW-0812">Transmembrane</keyword>
<keyword id="KW-1133">Transmembrane helix</keyword>
<organism>
    <name type="scientific">Salmonella typhi</name>
    <dbReference type="NCBI Taxonomy" id="90370"/>
    <lineage>
        <taxon>Bacteria</taxon>
        <taxon>Pseudomonadati</taxon>
        <taxon>Pseudomonadota</taxon>
        <taxon>Gammaproteobacteria</taxon>
        <taxon>Enterobacterales</taxon>
        <taxon>Enterobacteriaceae</taxon>
        <taxon>Salmonella</taxon>
    </lineage>
</organism>
<comment type="subcellular location">
    <subcellularLocation>
        <location evidence="1">Cell inner membrane</location>
        <topology evidence="1">Multi-pass membrane protein</topology>
    </subcellularLocation>
</comment>
<comment type="similarity">
    <text evidence="1">Belongs to the UPF0060 family.</text>
</comment>
<proteinExistence type="inferred from homology"/>
<accession>Q8Z6Z2</accession>
<name>YNFA_SALTI</name>
<reference key="1">
    <citation type="journal article" date="2001" name="Nature">
        <title>Complete genome sequence of a multiple drug resistant Salmonella enterica serovar Typhi CT18.</title>
        <authorList>
            <person name="Parkhill J."/>
            <person name="Dougan G."/>
            <person name="James K.D."/>
            <person name="Thomson N.R."/>
            <person name="Pickard D."/>
            <person name="Wain J."/>
            <person name="Churcher C.M."/>
            <person name="Mungall K.L."/>
            <person name="Bentley S.D."/>
            <person name="Holden M.T.G."/>
            <person name="Sebaihia M."/>
            <person name="Baker S."/>
            <person name="Basham D."/>
            <person name="Brooks K."/>
            <person name="Chillingworth T."/>
            <person name="Connerton P."/>
            <person name="Cronin A."/>
            <person name="Davis P."/>
            <person name="Davies R.M."/>
            <person name="Dowd L."/>
            <person name="White N."/>
            <person name="Farrar J."/>
            <person name="Feltwell T."/>
            <person name="Hamlin N."/>
            <person name="Haque A."/>
            <person name="Hien T.T."/>
            <person name="Holroyd S."/>
            <person name="Jagels K."/>
            <person name="Krogh A."/>
            <person name="Larsen T.S."/>
            <person name="Leather S."/>
            <person name="Moule S."/>
            <person name="O'Gaora P."/>
            <person name="Parry C."/>
            <person name="Quail M.A."/>
            <person name="Rutherford K.M."/>
            <person name="Simmonds M."/>
            <person name="Skelton J."/>
            <person name="Stevens K."/>
            <person name="Whitehead S."/>
            <person name="Barrell B.G."/>
        </authorList>
    </citation>
    <scope>NUCLEOTIDE SEQUENCE [LARGE SCALE GENOMIC DNA]</scope>
    <source>
        <strain>CT18</strain>
    </source>
</reference>
<reference key="2">
    <citation type="journal article" date="2003" name="J. Bacteriol.">
        <title>Comparative genomics of Salmonella enterica serovar Typhi strains Ty2 and CT18.</title>
        <authorList>
            <person name="Deng W."/>
            <person name="Liou S.-R."/>
            <person name="Plunkett G. III"/>
            <person name="Mayhew G.F."/>
            <person name="Rose D.J."/>
            <person name="Burland V."/>
            <person name="Kodoyianni V."/>
            <person name="Schwartz D.C."/>
            <person name="Blattner F.R."/>
        </authorList>
    </citation>
    <scope>NUCLEOTIDE SEQUENCE [LARGE SCALE GENOMIC DNA]</scope>
    <source>
        <strain>ATCC 700931 / Ty2</strain>
    </source>
</reference>
<sequence>MLKTTLLFFVTALCEIIGCFLPWLWIKRGASVWWLLPAAASLALFVWLLTLHPAASGRVYAAYGGVYVCTALLWLRVVDGVRLTVYDWSGALIALCGMLIIVVGWGRT</sequence>
<protein>
    <recommendedName>
        <fullName evidence="1">UPF0060 membrane protein YnfA</fullName>
    </recommendedName>
</protein>
<gene>
    <name evidence="1" type="primary">ynfA</name>
    <name type="ordered locus">STY1558</name>
    <name type="ordered locus">t1425</name>
</gene>
<evidence type="ECO:0000255" key="1">
    <source>
        <dbReference type="HAMAP-Rule" id="MF_00010"/>
    </source>
</evidence>
<feature type="chain" id="PRO_0000162343" description="UPF0060 membrane protein YnfA">
    <location>
        <begin position="1"/>
        <end position="108"/>
    </location>
</feature>
<feature type="topological domain" description="Periplasmic" evidence="1">
    <location>
        <begin position="1"/>
        <end position="5"/>
    </location>
</feature>
<feature type="transmembrane region" description="Helical" evidence="1">
    <location>
        <begin position="6"/>
        <end position="26"/>
    </location>
</feature>
<feature type="topological domain" description="Cytoplasmic" evidence="1">
    <location>
        <begin position="27"/>
        <end position="30"/>
    </location>
</feature>
<feature type="transmembrane region" description="Helical" evidence="1">
    <location>
        <begin position="31"/>
        <end position="51"/>
    </location>
</feature>
<feature type="topological domain" description="Periplasmic" evidence="1">
    <location>
        <begin position="52"/>
        <end position="60"/>
    </location>
</feature>
<feature type="transmembrane region" description="Helical" evidence="1">
    <location>
        <begin position="61"/>
        <end position="81"/>
    </location>
</feature>
<feature type="topological domain" description="Cytoplasmic" evidence="1">
    <location>
        <begin position="82"/>
        <end position="84"/>
    </location>
</feature>
<feature type="transmembrane region" description="Helical" evidence="1">
    <location>
        <begin position="85"/>
        <end position="105"/>
    </location>
</feature>
<feature type="topological domain" description="Periplasmic" evidence="1">
    <location>
        <begin position="106"/>
        <end position="108"/>
    </location>
</feature>
<dbReference type="EMBL" id="AL513382">
    <property type="protein sequence ID" value="CAD01809.1"/>
    <property type="molecule type" value="Genomic_DNA"/>
</dbReference>
<dbReference type="EMBL" id="AE014613">
    <property type="protein sequence ID" value="AAO69068.1"/>
    <property type="molecule type" value="Genomic_DNA"/>
</dbReference>
<dbReference type="RefSeq" id="NP_455976.1">
    <property type="nucleotide sequence ID" value="NC_003198.1"/>
</dbReference>
<dbReference type="RefSeq" id="WP_000921383.1">
    <property type="nucleotide sequence ID" value="NZ_WSUR01000006.1"/>
</dbReference>
<dbReference type="SMR" id="Q8Z6Z2"/>
<dbReference type="STRING" id="220341.gene:17585499"/>
<dbReference type="KEGG" id="stt:t1425"/>
<dbReference type="KEGG" id="sty:STY1558"/>
<dbReference type="PATRIC" id="fig|220341.7.peg.1568"/>
<dbReference type="eggNOG" id="COG1742">
    <property type="taxonomic scope" value="Bacteria"/>
</dbReference>
<dbReference type="HOGENOM" id="CLU_117653_2_1_6"/>
<dbReference type="OMA" id="DLYDWIG"/>
<dbReference type="Proteomes" id="UP000000541">
    <property type="component" value="Chromosome"/>
</dbReference>
<dbReference type="Proteomes" id="UP000002670">
    <property type="component" value="Chromosome"/>
</dbReference>
<dbReference type="GO" id="GO:0005886">
    <property type="term" value="C:plasma membrane"/>
    <property type="evidence" value="ECO:0007669"/>
    <property type="project" value="UniProtKB-SubCell"/>
</dbReference>
<dbReference type="HAMAP" id="MF_00010">
    <property type="entry name" value="UPF0060"/>
    <property type="match status" value="1"/>
</dbReference>
<dbReference type="InterPro" id="IPR003844">
    <property type="entry name" value="UPF0060"/>
</dbReference>
<dbReference type="NCBIfam" id="NF002586">
    <property type="entry name" value="PRK02237.1"/>
    <property type="match status" value="1"/>
</dbReference>
<dbReference type="PANTHER" id="PTHR36116">
    <property type="entry name" value="UPF0060 MEMBRANE PROTEIN YNFA"/>
    <property type="match status" value="1"/>
</dbReference>
<dbReference type="PANTHER" id="PTHR36116:SF1">
    <property type="entry name" value="UPF0060 MEMBRANE PROTEIN YNFA"/>
    <property type="match status" value="1"/>
</dbReference>
<dbReference type="Pfam" id="PF02694">
    <property type="entry name" value="UPF0060"/>
    <property type="match status" value="1"/>
</dbReference>
<dbReference type="SUPFAM" id="SSF103481">
    <property type="entry name" value="Multidrug resistance efflux transporter EmrE"/>
    <property type="match status" value="1"/>
</dbReference>